<comment type="function">
    <text evidence="1">Catalyzes the condensation of carbamoyl phosphate and aspartate to form carbamoyl aspartate and inorganic phosphate, the committed step in the de novo pyrimidine nucleotide biosynthesis pathway.</text>
</comment>
<comment type="catalytic activity">
    <reaction evidence="1">
        <text>carbamoyl phosphate + L-aspartate = N-carbamoyl-L-aspartate + phosphate + H(+)</text>
        <dbReference type="Rhea" id="RHEA:20013"/>
        <dbReference type="ChEBI" id="CHEBI:15378"/>
        <dbReference type="ChEBI" id="CHEBI:29991"/>
        <dbReference type="ChEBI" id="CHEBI:32814"/>
        <dbReference type="ChEBI" id="CHEBI:43474"/>
        <dbReference type="ChEBI" id="CHEBI:58228"/>
        <dbReference type="EC" id="2.1.3.2"/>
    </reaction>
</comment>
<comment type="pathway">
    <text evidence="1">Pyrimidine metabolism; UMP biosynthesis via de novo pathway; (S)-dihydroorotate from bicarbonate: step 2/3.</text>
</comment>
<comment type="subunit">
    <text evidence="1">Heterododecamer (2C3:3R2) of six catalytic PyrB chains organized as two trimers (C3), and six regulatory PyrI chains organized as three dimers (R2).</text>
</comment>
<comment type="similarity">
    <text evidence="1">Belongs to the aspartate/ornithine carbamoyltransferase superfamily. ATCase family.</text>
</comment>
<proteinExistence type="inferred from homology"/>
<name>PYRB_PHOV8</name>
<sequence>MENRSLVTIAEHSKEKILYLLEMAKEFEKKPNRKILDGKVVATLFFEPSTRTRLSFETAANRLGARVIGFTDPKVTSSSKGETLKDTIMMVSNYADIIVMRHFLEGAARYASEVAPVPIVNAGDGANQHPSQTMLDLYSIYKTQGTLENLNIYLVGDLKYGRTVHSLLMAMRHFNPTFHFIAPEELKMPEEYKIYCKEHHIKYKEYTDFNEETIADADILYMTRVQRERFTDLMEYERVKDVYILRNKMLEHTRPNLRILHPLPRVNEIAYDVDENPKAYYFQQAQNGLYARQAILCDVLGITLNDVIEDAKK</sequence>
<organism>
    <name type="scientific">Phocaeicola vulgatus (strain ATCC 8482 / DSM 1447 / JCM 5826 / CCUG 4940 / NBRC 14291 / NCTC 11154)</name>
    <name type="common">Bacteroides vulgatus</name>
    <dbReference type="NCBI Taxonomy" id="435590"/>
    <lineage>
        <taxon>Bacteria</taxon>
        <taxon>Pseudomonadati</taxon>
        <taxon>Bacteroidota</taxon>
        <taxon>Bacteroidia</taxon>
        <taxon>Bacteroidales</taxon>
        <taxon>Bacteroidaceae</taxon>
        <taxon>Phocaeicola</taxon>
    </lineage>
</organism>
<accession>A6L5J9</accession>
<keyword id="KW-0665">Pyrimidine biosynthesis</keyword>
<keyword id="KW-0808">Transferase</keyword>
<gene>
    <name evidence="1" type="primary">pyrB</name>
    <name type="ordered locus">BVU_3337</name>
</gene>
<reference key="1">
    <citation type="journal article" date="2007" name="PLoS Biol.">
        <title>Evolution of symbiotic bacteria in the distal human intestine.</title>
        <authorList>
            <person name="Xu J."/>
            <person name="Mahowald M.A."/>
            <person name="Ley R.E."/>
            <person name="Lozupone C.A."/>
            <person name="Hamady M."/>
            <person name="Martens E.C."/>
            <person name="Henrissat B."/>
            <person name="Coutinho P.M."/>
            <person name="Minx P."/>
            <person name="Latreille P."/>
            <person name="Cordum H."/>
            <person name="Van Brunt A."/>
            <person name="Kim K."/>
            <person name="Fulton R.S."/>
            <person name="Fulton L.A."/>
            <person name="Clifton S.W."/>
            <person name="Wilson R.K."/>
            <person name="Knight R.D."/>
            <person name="Gordon J.I."/>
        </authorList>
    </citation>
    <scope>NUCLEOTIDE SEQUENCE [LARGE SCALE GENOMIC DNA]</scope>
    <source>
        <strain>ATCC 8482 / DSM 1447 / JCM 5826 / CCUG 4940 / NBRC 14291 / NCTC 11154</strain>
    </source>
</reference>
<protein>
    <recommendedName>
        <fullName evidence="1">Aspartate carbamoyltransferase catalytic subunit</fullName>
        <ecNumber evidence="1">2.1.3.2</ecNumber>
    </recommendedName>
    <alternativeName>
        <fullName evidence="1">Aspartate transcarbamylase</fullName>
        <shortName evidence="1">ATCase</shortName>
    </alternativeName>
</protein>
<dbReference type="EC" id="2.1.3.2" evidence="1"/>
<dbReference type="EMBL" id="CP000139">
    <property type="protein sequence ID" value="ABR40963.1"/>
    <property type="molecule type" value="Genomic_DNA"/>
</dbReference>
<dbReference type="RefSeq" id="WP_005842002.1">
    <property type="nucleotide sequence ID" value="NZ_JANSWM010000114.1"/>
</dbReference>
<dbReference type="SMR" id="A6L5J9"/>
<dbReference type="STRING" id="435590.BVU_3337"/>
<dbReference type="PaxDb" id="435590-BVU_3337"/>
<dbReference type="GeneID" id="5304298"/>
<dbReference type="KEGG" id="bvu:BVU_3337"/>
<dbReference type="eggNOG" id="COG0540">
    <property type="taxonomic scope" value="Bacteria"/>
</dbReference>
<dbReference type="HOGENOM" id="CLU_043846_1_2_10"/>
<dbReference type="BioCyc" id="BVUL435590:G1G59-3459-MONOMER"/>
<dbReference type="UniPathway" id="UPA00070">
    <property type="reaction ID" value="UER00116"/>
</dbReference>
<dbReference type="Proteomes" id="UP000002861">
    <property type="component" value="Chromosome"/>
</dbReference>
<dbReference type="GO" id="GO:0005829">
    <property type="term" value="C:cytosol"/>
    <property type="evidence" value="ECO:0007669"/>
    <property type="project" value="TreeGrafter"/>
</dbReference>
<dbReference type="GO" id="GO:0016597">
    <property type="term" value="F:amino acid binding"/>
    <property type="evidence" value="ECO:0007669"/>
    <property type="project" value="InterPro"/>
</dbReference>
<dbReference type="GO" id="GO:0004070">
    <property type="term" value="F:aspartate carbamoyltransferase activity"/>
    <property type="evidence" value="ECO:0007669"/>
    <property type="project" value="UniProtKB-UniRule"/>
</dbReference>
<dbReference type="GO" id="GO:0006207">
    <property type="term" value="P:'de novo' pyrimidine nucleobase biosynthetic process"/>
    <property type="evidence" value="ECO:0007669"/>
    <property type="project" value="InterPro"/>
</dbReference>
<dbReference type="GO" id="GO:0044205">
    <property type="term" value="P:'de novo' UMP biosynthetic process"/>
    <property type="evidence" value="ECO:0007669"/>
    <property type="project" value="UniProtKB-UniRule"/>
</dbReference>
<dbReference type="GO" id="GO:0006520">
    <property type="term" value="P:amino acid metabolic process"/>
    <property type="evidence" value="ECO:0007669"/>
    <property type="project" value="InterPro"/>
</dbReference>
<dbReference type="FunFam" id="3.40.50.1370:FF:000001">
    <property type="entry name" value="Aspartate carbamoyltransferase"/>
    <property type="match status" value="1"/>
</dbReference>
<dbReference type="FunFam" id="3.40.50.1370:FF:000002">
    <property type="entry name" value="Aspartate carbamoyltransferase 2"/>
    <property type="match status" value="1"/>
</dbReference>
<dbReference type="Gene3D" id="3.40.50.1370">
    <property type="entry name" value="Aspartate/ornithine carbamoyltransferase"/>
    <property type="match status" value="2"/>
</dbReference>
<dbReference type="HAMAP" id="MF_00001">
    <property type="entry name" value="Asp_carb_tr"/>
    <property type="match status" value="1"/>
</dbReference>
<dbReference type="InterPro" id="IPR006132">
    <property type="entry name" value="Asp/Orn_carbamoyltranf_P-bd"/>
</dbReference>
<dbReference type="InterPro" id="IPR006130">
    <property type="entry name" value="Asp/Orn_carbamoylTrfase"/>
</dbReference>
<dbReference type="InterPro" id="IPR036901">
    <property type="entry name" value="Asp/Orn_carbamoylTrfase_sf"/>
</dbReference>
<dbReference type="InterPro" id="IPR002082">
    <property type="entry name" value="Asp_carbamoyltransf"/>
</dbReference>
<dbReference type="InterPro" id="IPR006131">
    <property type="entry name" value="Asp_carbamoyltransf_Asp/Orn-bd"/>
</dbReference>
<dbReference type="NCBIfam" id="TIGR00670">
    <property type="entry name" value="asp_carb_tr"/>
    <property type="match status" value="1"/>
</dbReference>
<dbReference type="NCBIfam" id="NF002032">
    <property type="entry name" value="PRK00856.1"/>
    <property type="match status" value="1"/>
</dbReference>
<dbReference type="PANTHER" id="PTHR45753:SF6">
    <property type="entry name" value="ASPARTATE CARBAMOYLTRANSFERASE"/>
    <property type="match status" value="1"/>
</dbReference>
<dbReference type="PANTHER" id="PTHR45753">
    <property type="entry name" value="ORNITHINE CARBAMOYLTRANSFERASE, MITOCHONDRIAL"/>
    <property type="match status" value="1"/>
</dbReference>
<dbReference type="Pfam" id="PF00185">
    <property type="entry name" value="OTCace"/>
    <property type="match status" value="1"/>
</dbReference>
<dbReference type="Pfam" id="PF02729">
    <property type="entry name" value="OTCace_N"/>
    <property type="match status" value="1"/>
</dbReference>
<dbReference type="PRINTS" id="PR00100">
    <property type="entry name" value="AOTCASE"/>
</dbReference>
<dbReference type="PRINTS" id="PR00101">
    <property type="entry name" value="ATCASE"/>
</dbReference>
<dbReference type="SUPFAM" id="SSF53671">
    <property type="entry name" value="Aspartate/ornithine carbamoyltransferase"/>
    <property type="match status" value="1"/>
</dbReference>
<dbReference type="PROSITE" id="PS00097">
    <property type="entry name" value="CARBAMOYLTRANSFERASE"/>
    <property type="match status" value="1"/>
</dbReference>
<evidence type="ECO:0000255" key="1">
    <source>
        <dbReference type="HAMAP-Rule" id="MF_00001"/>
    </source>
</evidence>
<feature type="chain" id="PRO_0000301555" description="Aspartate carbamoyltransferase catalytic subunit">
    <location>
        <begin position="1"/>
        <end position="313"/>
    </location>
</feature>
<feature type="binding site" evidence="1">
    <location>
        <position position="51"/>
    </location>
    <ligand>
        <name>carbamoyl phosphate</name>
        <dbReference type="ChEBI" id="CHEBI:58228"/>
    </ligand>
</feature>
<feature type="binding site" evidence="1">
    <location>
        <position position="52"/>
    </location>
    <ligand>
        <name>carbamoyl phosphate</name>
        <dbReference type="ChEBI" id="CHEBI:58228"/>
    </ligand>
</feature>
<feature type="binding site" evidence="1">
    <location>
        <position position="80"/>
    </location>
    <ligand>
        <name>L-aspartate</name>
        <dbReference type="ChEBI" id="CHEBI:29991"/>
    </ligand>
</feature>
<feature type="binding site" evidence="1">
    <location>
        <position position="101"/>
    </location>
    <ligand>
        <name>carbamoyl phosphate</name>
        <dbReference type="ChEBI" id="CHEBI:58228"/>
    </ligand>
</feature>
<feature type="binding site" evidence="1">
    <location>
        <position position="129"/>
    </location>
    <ligand>
        <name>carbamoyl phosphate</name>
        <dbReference type="ChEBI" id="CHEBI:58228"/>
    </ligand>
</feature>
<feature type="binding site" evidence="1">
    <location>
        <position position="132"/>
    </location>
    <ligand>
        <name>carbamoyl phosphate</name>
        <dbReference type="ChEBI" id="CHEBI:58228"/>
    </ligand>
</feature>
<feature type="binding site" evidence="1">
    <location>
        <position position="162"/>
    </location>
    <ligand>
        <name>L-aspartate</name>
        <dbReference type="ChEBI" id="CHEBI:29991"/>
    </ligand>
</feature>
<feature type="binding site" evidence="1">
    <location>
        <position position="224"/>
    </location>
    <ligand>
        <name>L-aspartate</name>
        <dbReference type="ChEBI" id="CHEBI:29991"/>
    </ligand>
</feature>
<feature type="binding site" evidence="1">
    <location>
        <position position="263"/>
    </location>
    <ligand>
        <name>carbamoyl phosphate</name>
        <dbReference type="ChEBI" id="CHEBI:58228"/>
    </ligand>
</feature>
<feature type="binding site" evidence="1">
    <location>
        <position position="264"/>
    </location>
    <ligand>
        <name>carbamoyl phosphate</name>
        <dbReference type="ChEBI" id="CHEBI:58228"/>
    </ligand>
</feature>